<proteinExistence type="evidence at protein level"/>
<dbReference type="EMBL" id="AY935250">
    <property type="protein sequence ID" value="AAY21181.1"/>
    <property type="molecule type" value="mRNA"/>
</dbReference>
<dbReference type="SMR" id="A1L015"/>
<dbReference type="DIP" id="DIP-48694N"/>
<dbReference type="IntAct" id="A1L015">
    <property type="interactions" value="1"/>
</dbReference>
<dbReference type="MEROPS" id="I25.047"/>
<dbReference type="GlyCosmos" id="A1L015">
    <property type="glycosylation" value="1 site, No reported glycans"/>
</dbReference>
<dbReference type="VEuPathDB" id="FungiDB:PITG_09169"/>
<dbReference type="OMA" id="GWHNTTN"/>
<dbReference type="GO" id="GO:0005576">
    <property type="term" value="C:extracellular region"/>
    <property type="evidence" value="ECO:0007669"/>
    <property type="project" value="UniProtKB-SubCell"/>
</dbReference>
<dbReference type="GO" id="GO:0004869">
    <property type="term" value="F:cysteine-type endopeptidase inhibitor activity"/>
    <property type="evidence" value="ECO:0007669"/>
    <property type="project" value="UniProtKB-KW"/>
</dbReference>
<dbReference type="Gene3D" id="3.10.450.10">
    <property type="match status" value="1"/>
</dbReference>
<dbReference type="InterPro" id="IPR046350">
    <property type="entry name" value="Cystatin_sf"/>
</dbReference>
<dbReference type="SUPFAM" id="SSF54403">
    <property type="entry name" value="Cystatin/monellin"/>
    <property type="match status" value="1"/>
</dbReference>
<dbReference type="PROSITE" id="PS00287">
    <property type="entry name" value="CYSTATIN"/>
    <property type="match status" value="1"/>
</dbReference>
<keyword id="KW-0325">Glycoprotein</keyword>
<keyword id="KW-0646">Protease inhibitor</keyword>
<keyword id="KW-0964">Secreted</keyword>
<keyword id="KW-0732">Signal</keyword>
<keyword id="KW-0789">Thiol protease inhibitor</keyword>
<keyword id="KW-0843">Virulence</keyword>
<evidence type="ECO:0000250" key="1">
    <source>
        <dbReference type="UniProtKB" id="P01040"/>
    </source>
</evidence>
<evidence type="ECO:0000255" key="2"/>
<evidence type="ECO:0000255" key="3">
    <source>
        <dbReference type="PROSITE-ProRule" id="PRU00498"/>
    </source>
</evidence>
<evidence type="ECO:0000269" key="4">
    <source>
    </source>
</evidence>
<evidence type="ECO:0000269" key="5">
    <source>
    </source>
</evidence>
<evidence type="ECO:0000269" key="6">
    <source>
    </source>
</evidence>
<evidence type="ECO:0000303" key="7">
    <source>
    </source>
</evidence>
<evidence type="ECO:0000305" key="8"/>
<evidence type="ECO:0000305" key="9">
    <source>
    </source>
</evidence>
<gene>
    <name evidence="7" type="primary">EPIC1</name>
</gene>
<sequence length="126" mass="13711">MTFLRPILALLAATALVTTSAQVDGGYSKKEVTPEDMELLQKAQSNVSAYNSDVTSRICYLKVDSLETQVVSGENYKFHVSGCSVNSDNELGGCANQNCESSKYDIVIYSQSWTNTLEVTSITPVK</sequence>
<name>EPIC1_PHYIN</name>
<accession>A1L015</accession>
<feature type="signal peptide" evidence="2">
    <location>
        <begin position="1"/>
        <end position="21"/>
    </location>
</feature>
<feature type="chain" id="PRO_0000448005" description="Cystatin-like cysteine protease inhibitor EPIC1">
    <location>
        <begin position="22"/>
        <end position="126"/>
    </location>
</feature>
<feature type="short sequence motif" description="Secondary area of contact" evidence="1">
    <location>
        <begin position="69"/>
        <end position="73"/>
    </location>
</feature>
<feature type="site" description="Reactive site" evidence="1">
    <location>
        <position position="25"/>
    </location>
</feature>
<feature type="glycosylation site" description="N-linked (GlcNAc...) asparagine" evidence="3">
    <location>
        <position position="46"/>
    </location>
</feature>
<organism>
    <name type="scientific">Phytophthora infestans</name>
    <name type="common">Potato late blight agent</name>
    <name type="synonym">Botrytis infestans</name>
    <dbReference type="NCBI Taxonomy" id="4787"/>
    <lineage>
        <taxon>Eukaryota</taxon>
        <taxon>Sar</taxon>
        <taxon>Stramenopiles</taxon>
        <taxon>Oomycota</taxon>
        <taxon>Peronosporales</taxon>
        <taxon>Peronosporaceae</taxon>
        <taxon>Phytophthora</taxon>
    </lineage>
</organism>
<reference key="1">
    <citation type="journal article" date="2007" name="Plant Physiol.">
        <title>A Phytophthora infestans cystatin-like protein targets a novel tomato papain-like apoplastic protease.</title>
        <authorList>
            <person name="Tian M."/>
            <person name="Win J."/>
            <person name="Song J."/>
            <person name="van der Hoorn R."/>
            <person name="van der Knaap E."/>
            <person name="Kamoun S."/>
        </authorList>
    </citation>
    <scope>NUCLEOTIDE SEQUENCE [MRNA]</scope>
    <scope>INDUCTION</scope>
    <scope>FUNCTION</scope>
    <scope>SUBCELLULAR LOCATION</scope>
    <source>
        <strain>Isolate 88069</strain>
    </source>
</reference>
<reference key="2">
    <citation type="journal article" date="2009" name="Proc. Natl. Acad. Sci. U.S.A.">
        <title>Apoplastic effectors secreted by two unrelated eukaryotic plant pathogens target the tomato defense protease Rcr3.</title>
        <authorList>
            <person name="Song J."/>
            <person name="Win J."/>
            <person name="Tian M."/>
            <person name="Schornack S."/>
            <person name="Kaschani F."/>
            <person name="Ilyas M."/>
            <person name="van der Hoorn R.A."/>
            <person name="Kamoun S."/>
        </authorList>
    </citation>
    <scope>FUNCTION</scope>
    <scope>SUBCELLULAR LOCATION</scope>
    <scope>INTERACTION WITH HOST RCR3</scope>
</reference>
<reference key="3">
    <citation type="journal article" date="2010" name="Plant Physiol.">
        <title>An effector-targeted protease contributes to defense against Phytophthora infestans and is under diversifying selection in natural hosts.</title>
        <authorList>
            <person name="Kaschani F."/>
            <person name="Shabab M."/>
            <person name="Bozkurt T."/>
            <person name="Shindo T."/>
            <person name="Schornack S."/>
            <person name="Gu C."/>
            <person name="Ilyas M."/>
            <person name="Win J."/>
            <person name="Kamoun S."/>
            <person name="van der Hoorn R.A."/>
        </authorList>
    </citation>
    <scope>FUNCTION</scope>
    <scope>SUBCELLULAR LOCATION</scope>
    <scope>INTERACTION WITH HOST C14</scope>
</reference>
<reference key="4">
    <citation type="journal article" date="2011" name="Plant Signal. Behav.">
        <title>A model of the C14-EPIC complex indicates hotspots for a protease-inhibitor arms race in the oomycete-potato interaction.</title>
        <authorList>
            <person name="Kaschani F."/>
            <person name="Van der Hoorn R.A."/>
        </authorList>
    </citation>
    <scope>EPIC1-C14 COMPLEX STRUCTURE MODELING</scope>
</reference>
<comment type="function">
    <text evidence="4 5">Secreted effector that interacts with and inhibits the pathogenesis-related papain-like cysteine proteases C14 and RCR3 of host plants (PubMed:17085509, PubMed:19171904). Inhibition of host proteases by a pathogen extracellular protease inhibitor forms a specific type of defense-counterdefense mechanism between plants and microbial pathogens (PubMed:17085509).</text>
</comment>
<comment type="subunit">
    <text evidence="5 6 9">Interacts with the host papain-like cysteine protease RCR3 (PubMed:19171904). Interacts with the host papain-like cysteine protease C14 (Probable) (PubMed:20940351).</text>
</comment>
<comment type="subcellular location">
    <subcellularLocation>
        <location evidence="4 5 6">Secreted</location>
    </subcellularLocation>
    <text evidence="4 5 6">Localizes to host apoplast where it targets defense proteases for inhibition.</text>
</comment>
<comment type="induction">
    <text evidence="4">Expression is up-regulated during infection of host tomato.</text>
</comment>
<comment type="similarity">
    <text evidence="8">Belongs to the cystatin family.</text>
</comment>
<protein>
    <recommendedName>
        <fullName evidence="7">Cystatin-like cysteine protease inhibitor EPIC1</fullName>
    </recommendedName>
    <alternativeName>
        <fullName evidence="7">Extracellular protease inhibitor with cystatin-like domain protein 1</fullName>
    </alternativeName>
    <alternativeName>
        <fullName evidence="7">Secreted effector EPIC1</fullName>
    </alternativeName>
</protein>